<sequence length="399" mass="44435">MKRPRPHCSFCGLRPPETGRLLESPIEDVYICEDCVERAQEILAQEERRAPKGPSRLPRPQEIKAHLDQYVVGQEAAKRALSVAVYNHYKRLLHPEAEIGKANILLIGPTGTGKTLLAETLARFLDVPFAIADATTLTEAGYVGEDVENVLLRLLQNADFDVERAEMGIVYIDEIDKIARKSENPSLTRDVSGEGVQQALLKIIEGTVANVPPQGGRKHPHQEFIPVNTKNILFILGGAFEGLENIVKARVGKTTIGFTGERREREEPLEVIPEDLIKFGMIPEFVGRAPLIVQLHPLGEDDLVRILTEPKNALVKQYQELFRMEGIELRFTQAALKEVARRALKRGTGARGLRAILEKAMVDLMFEAPGSGVKEIVFDLPHLDHPLKALEEARLRQAS</sequence>
<comment type="function">
    <text evidence="1">ATP-dependent specificity component of the Clp protease. It directs the protease to specific substrates. Can perform chaperone functions in the absence of ClpP.</text>
</comment>
<comment type="subunit">
    <text evidence="1">Component of the ClpX-ClpP complex. Forms a hexameric ring that, in the presence of ATP, binds to fourteen ClpP subunits assembled into a disk-like structure with a central cavity, resembling the structure of eukaryotic proteasomes.</text>
</comment>
<comment type="similarity">
    <text evidence="1">Belongs to the ClpX chaperone family.</text>
</comment>
<dbReference type="EMBL" id="AE017221">
    <property type="protein sequence ID" value="AAS80599.1"/>
    <property type="molecule type" value="Genomic_DNA"/>
</dbReference>
<dbReference type="RefSeq" id="WP_011172702.1">
    <property type="nucleotide sequence ID" value="NC_005835.1"/>
</dbReference>
<dbReference type="SMR" id="Q72L14"/>
<dbReference type="KEGG" id="tth:TT_C0251"/>
<dbReference type="eggNOG" id="COG1219">
    <property type="taxonomic scope" value="Bacteria"/>
</dbReference>
<dbReference type="HOGENOM" id="CLU_014218_8_2_0"/>
<dbReference type="OrthoDB" id="9804062at2"/>
<dbReference type="Proteomes" id="UP000000592">
    <property type="component" value="Chromosome"/>
</dbReference>
<dbReference type="GO" id="GO:0009376">
    <property type="term" value="C:HslUV protease complex"/>
    <property type="evidence" value="ECO:0007669"/>
    <property type="project" value="TreeGrafter"/>
</dbReference>
<dbReference type="GO" id="GO:0005524">
    <property type="term" value="F:ATP binding"/>
    <property type="evidence" value="ECO:0007669"/>
    <property type="project" value="UniProtKB-UniRule"/>
</dbReference>
<dbReference type="GO" id="GO:0016887">
    <property type="term" value="F:ATP hydrolysis activity"/>
    <property type="evidence" value="ECO:0007669"/>
    <property type="project" value="InterPro"/>
</dbReference>
<dbReference type="GO" id="GO:0140662">
    <property type="term" value="F:ATP-dependent protein folding chaperone"/>
    <property type="evidence" value="ECO:0007669"/>
    <property type="project" value="InterPro"/>
</dbReference>
<dbReference type="GO" id="GO:0046983">
    <property type="term" value="F:protein dimerization activity"/>
    <property type="evidence" value="ECO:0007669"/>
    <property type="project" value="InterPro"/>
</dbReference>
<dbReference type="GO" id="GO:0051082">
    <property type="term" value="F:unfolded protein binding"/>
    <property type="evidence" value="ECO:0007669"/>
    <property type="project" value="UniProtKB-UniRule"/>
</dbReference>
<dbReference type="GO" id="GO:0008270">
    <property type="term" value="F:zinc ion binding"/>
    <property type="evidence" value="ECO:0007669"/>
    <property type="project" value="InterPro"/>
</dbReference>
<dbReference type="GO" id="GO:0051301">
    <property type="term" value="P:cell division"/>
    <property type="evidence" value="ECO:0007669"/>
    <property type="project" value="TreeGrafter"/>
</dbReference>
<dbReference type="GO" id="GO:0051603">
    <property type="term" value="P:proteolysis involved in protein catabolic process"/>
    <property type="evidence" value="ECO:0007669"/>
    <property type="project" value="TreeGrafter"/>
</dbReference>
<dbReference type="CDD" id="cd19497">
    <property type="entry name" value="RecA-like_ClpX"/>
    <property type="match status" value="1"/>
</dbReference>
<dbReference type="FunFam" id="1.10.8.60:FF:000002">
    <property type="entry name" value="ATP-dependent Clp protease ATP-binding subunit ClpX"/>
    <property type="match status" value="1"/>
</dbReference>
<dbReference type="FunFam" id="3.40.50.300:FF:000005">
    <property type="entry name" value="ATP-dependent Clp protease ATP-binding subunit ClpX"/>
    <property type="match status" value="1"/>
</dbReference>
<dbReference type="Gene3D" id="1.10.8.60">
    <property type="match status" value="1"/>
</dbReference>
<dbReference type="Gene3D" id="6.20.220.10">
    <property type="entry name" value="ClpX chaperone, C4-type zinc finger domain"/>
    <property type="match status" value="1"/>
</dbReference>
<dbReference type="Gene3D" id="3.40.50.300">
    <property type="entry name" value="P-loop containing nucleotide triphosphate hydrolases"/>
    <property type="match status" value="1"/>
</dbReference>
<dbReference type="HAMAP" id="MF_00175">
    <property type="entry name" value="ClpX"/>
    <property type="match status" value="1"/>
</dbReference>
<dbReference type="InterPro" id="IPR003593">
    <property type="entry name" value="AAA+_ATPase"/>
</dbReference>
<dbReference type="InterPro" id="IPR050052">
    <property type="entry name" value="ATP-dep_Clp_protease_ClpX"/>
</dbReference>
<dbReference type="InterPro" id="IPR003959">
    <property type="entry name" value="ATPase_AAA_core"/>
</dbReference>
<dbReference type="InterPro" id="IPR019489">
    <property type="entry name" value="Clp_ATPase_C"/>
</dbReference>
<dbReference type="InterPro" id="IPR004487">
    <property type="entry name" value="Clp_protease_ATP-bd_su_ClpX"/>
</dbReference>
<dbReference type="InterPro" id="IPR046425">
    <property type="entry name" value="ClpX_bact"/>
</dbReference>
<dbReference type="InterPro" id="IPR027417">
    <property type="entry name" value="P-loop_NTPase"/>
</dbReference>
<dbReference type="InterPro" id="IPR010603">
    <property type="entry name" value="Znf_CppX_C4"/>
</dbReference>
<dbReference type="InterPro" id="IPR038366">
    <property type="entry name" value="Znf_CppX_C4_sf"/>
</dbReference>
<dbReference type="NCBIfam" id="TIGR00382">
    <property type="entry name" value="clpX"/>
    <property type="match status" value="1"/>
</dbReference>
<dbReference type="NCBIfam" id="NF003745">
    <property type="entry name" value="PRK05342.1"/>
    <property type="match status" value="1"/>
</dbReference>
<dbReference type="PANTHER" id="PTHR48102:SF7">
    <property type="entry name" value="ATP-DEPENDENT CLP PROTEASE ATP-BINDING SUBUNIT CLPX-LIKE, MITOCHONDRIAL"/>
    <property type="match status" value="1"/>
</dbReference>
<dbReference type="PANTHER" id="PTHR48102">
    <property type="entry name" value="ATP-DEPENDENT CLP PROTEASE ATP-BINDING SUBUNIT CLPX-LIKE, MITOCHONDRIAL-RELATED"/>
    <property type="match status" value="1"/>
</dbReference>
<dbReference type="Pfam" id="PF07724">
    <property type="entry name" value="AAA_2"/>
    <property type="match status" value="1"/>
</dbReference>
<dbReference type="Pfam" id="PF10431">
    <property type="entry name" value="ClpB_D2-small"/>
    <property type="match status" value="1"/>
</dbReference>
<dbReference type="Pfam" id="PF06689">
    <property type="entry name" value="zf-C4_ClpX"/>
    <property type="match status" value="1"/>
</dbReference>
<dbReference type="SMART" id="SM00382">
    <property type="entry name" value="AAA"/>
    <property type="match status" value="1"/>
</dbReference>
<dbReference type="SMART" id="SM01086">
    <property type="entry name" value="ClpB_D2-small"/>
    <property type="match status" value="1"/>
</dbReference>
<dbReference type="SMART" id="SM00994">
    <property type="entry name" value="zf-C4_ClpX"/>
    <property type="match status" value="1"/>
</dbReference>
<dbReference type="SUPFAM" id="SSF57716">
    <property type="entry name" value="Glucocorticoid receptor-like (DNA-binding domain)"/>
    <property type="match status" value="1"/>
</dbReference>
<dbReference type="SUPFAM" id="SSF52540">
    <property type="entry name" value="P-loop containing nucleoside triphosphate hydrolases"/>
    <property type="match status" value="1"/>
</dbReference>
<dbReference type="PROSITE" id="PS51902">
    <property type="entry name" value="CLPX_ZB"/>
    <property type="match status" value="1"/>
</dbReference>
<protein>
    <recommendedName>
        <fullName evidence="1">ATP-dependent Clp protease ATP-binding subunit ClpX</fullName>
    </recommendedName>
</protein>
<gene>
    <name evidence="1" type="primary">clpX</name>
    <name type="ordered locus">TT_C0251</name>
</gene>
<reference key="1">
    <citation type="journal article" date="2004" name="Nat. Biotechnol.">
        <title>The genome sequence of the extreme thermophile Thermus thermophilus.</title>
        <authorList>
            <person name="Henne A."/>
            <person name="Brueggemann H."/>
            <person name="Raasch C."/>
            <person name="Wiezer A."/>
            <person name="Hartsch T."/>
            <person name="Liesegang H."/>
            <person name="Johann A."/>
            <person name="Lienard T."/>
            <person name="Gohl O."/>
            <person name="Martinez-Arias R."/>
            <person name="Jacobi C."/>
            <person name="Starkuviene V."/>
            <person name="Schlenczeck S."/>
            <person name="Dencker S."/>
            <person name="Huber R."/>
            <person name="Klenk H.-P."/>
            <person name="Kramer W."/>
            <person name="Merkl R."/>
            <person name="Gottschalk G."/>
            <person name="Fritz H.-J."/>
        </authorList>
    </citation>
    <scope>NUCLEOTIDE SEQUENCE [LARGE SCALE GENOMIC DNA]</scope>
    <source>
        <strain>ATCC BAA-163 / DSM 7039 / HB27</strain>
    </source>
</reference>
<keyword id="KW-0067">ATP-binding</keyword>
<keyword id="KW-0143">Chaperone</keyword>
<keyword id="KW-0479">Metal-binding</keyword>
<keyword id="KW-0547">Nucleotide-binding</keyword>
<keyword id="KW-0862">Zinc</keyword>
<feature type="chain" id="PRO_0000160445" description="ATP-dependent Clp protease ATP-binding subunit ClpX">
    <location>
        <begin position="1"/>
        <end position="399"/>
    </location>
</feature>
<feature type="domain" description="ClpX-type ZB" evidence="2">
    <location>
        <begin position="1"/>
        <end position="51"/>
    </location>
</feature>
<feature type="binding site" evidence="2">
    <location>
        <position position="8"/>
    </location>
    <ligand>
        <name>Zn(2+)</name>
        <dbReference type="ChEBI" id="CHEBI:29105"/>
    </ligand>
</feature>
<feature type="binding site" evidence="2">
    <location>
        <position position="11"/>
    </location>
    <ligand>
        <name>Zn(2+)</name>
        <dbReference type="ChEBI" id="CHEBI:29105"/>
    </ligand>
</feature>
<feature type="binding site" evidence="2">
    <location>
        <position position="32"/>
    </location>
    <ligand>
        <name>Zn(2+)</name>
        <dbReference type="ChEBI" id="CHEBI:29105"/>
    </ligand>
</feature>
<feature type="binding site" evidence="2">
    <location>
        <position position="35"/>
    </location>
    <ligand>
        <name>Zn(2+)</name>
        <dbReference type="ChEBI" id="CHEBI:29105"/>
    </ligand>
</feature>
<feature type="binding site" evidence="1">
    <location>
        <begin position="109"/>
        <end position="116"/>
    </location>
    <ligand>
        <name>ATP</name>
        <dbReference type="ChEBI" id="CHEBI:30616"/>
    </ligand>
</feature>
<accession>Q72L14</accession>
<proteinExistence type="inferred from homology"/>
<evidence type="ECO:0000255" key="1">
    <source>
        <dbReference type="HAMAP-Rule" id="MF_00175"/>
    </source>
</evidence>
<evidence type="ECO:0000255" key="2">
    <source>
        <dbReference type="PROSITE-ProRule" id="PRU01250"/>
    </source>
</evidence>
<name>CLPX_THET2</name>
<organism>
    <name type="scientific">Thermus thermophilus (strain ATCC BAA-163 / DSM 7039 / HB27)</name>
    <dbReference type="NCBI Taxonomy" id="262724"/>
    <lineage>
        <taxon>Bacteria</taxon>
        <taxon>Thermotogati</taxon>
        <taxon>Deinococcota</taxon>
        <taxon>Deinococci</taxon>
        <taxon>Thermales</taxon>
        <taxon>Thermaceae</taxon>
        <taxon>Thermus</taxon>
    </lineage>
</organism>